<comment type="similarity">
    <text evidence="1">Belongs to the UPF0276 family.</text>
</comment>
<accession>Q9HWS2</accession>
<keyword id="KW-1185">Reference proteome</keyword>
<dbReference type="EMBL" id="AE004091">
    <property type="protein sequence ID" value="AAG07493.1"/>
    <property type="molecule type" value="Genomic_DNA"/>
</dbReference>
<dbReference type="PIR" id="B83132">
    <property type="entry name" value="B83132"/>
</dbReference>
<dbReference type="RefSeq" id="NP_252795.1">
    <property type="nucleotide sequence ID" value="NC_002516.2"/>
</dbReference>
<dbReference type="RefSeq" id="WP_003113017.1">
    <property type="nucleotide sequence ID" value="NZ_QZGE01000013.1"/>
</dbReference>
<dbReference type="SMR" id="Q9HWS2"/>
<dbReference type="STRING" id="208964.PA4106"/>
<dbReference type="PaxDb" id="208964-PA4106"/>
<dbReference type="DNASU" id="877737"/>
<dbReference type="GeneID" id="877737"/>
<dbReference type="KEGG" id="pae:PA4106"/>
<dbReference type="PATRIC" id="fig|208964.12.peg.4301"/>
<dbReference type="PseudoCAP" id="PA4106"/>
<dbReference type="HOGENOM" id="CLU_064263_0_0_6"/>
<dbReference type="InParanoid" id="Q9HWS2"/>
<dbReference type="OrthoDB" id="9763101at2"/>
<dbReference type="PhylomeDB" id="Q9HWS2"/>
<dbReference type="BioCyc" id="PAER208964:G1FZ6-4178-MONOMER"/>
<dbReference type="Proteomes" id="UP000002438">
    <property type="component" value="Chromosome"/>
</dbReference>
<dbReference type="Gene3D" id="3.20.20.150">
    <property type="entry name" value="Divalent-metal-dependent TIM barrel enzymes"/>
    <property type="match status" value="1"/>
</dbReference>
<dbReference type="HAMAP" id="MF_00697">
    <property type="entry name" value="UPF0276"/>
    <property type="match status" value="1"/>
</dbReference>
<dbReference type="InterPro" id="IPR007801">
    <property type="entry name" value="MbnB/TglH/ChrH"/>
</dbReference>
<dbReference type="InterPro" id="IPR036237">
    <property type="entry name" value="Xyl_isomerase-like_sf"/>
</dbReference>
<dbReference type="NCBIfam" id="NF003818">
    <property type="entry name" value="PRK05409.1"/>
    <property type="match status" value="1"/>
</dbReference>
<dbReference type="PANTHER" id="PTHR42194">
    <property type="entry name" value="UPF0276 PROTEIN HI_1600"/>
    <property type="match status" value="1"/>
</dbReference>
<dbReference type="PANTHER" id="PTHR42194:SF1">
    <property type="entry name" value="UPF0276 PROTEIN HI_1600"/>
    <property type="match status" value="1"/>
</dbReference>
<dbReference type="Pfam" id="PF05114">
    <property type="entry name" value="MbnB_TglH_ChrH"/>
    <property type="match status" value="1"/>
</dbReference>
<dbReference type="SUPFAM" id="SSF51658">
    <property type="entry name" value="Xylose isomerase-like"/>
    <property type="match status" value="1"/>
</dbReference>
<evidence type="ECO:0000255" key="1">
    <source>
        <dbReference type="HAMAP-Rule" id="MF_00697"/>
    </source>
</evidence>
<organism>
    <name type="scientific">Pseudomonas aeruginosa (strain ATCC 15692 / DSM 22644 / CIP 104116 / JCM 14847 / LMG 12228 / 1C / PRS 101 / PAO1)</name>
    <dbReference type="NCBI Taxonomy" id="208964"/>
    <lineage>
        <taxon>Bacteria</taxon>
        <taxon>Pseudomonadati</taxon>
        <taxon>Pseudomonadota</taxon>
        <taxon>Gammaproteobacteria</taxon>
        <taxon>Pseudomonadales</taxon>
        <taxon>Pseudomonadaceae</taxon>
        <taxon>Pseudomonas</taxon>
    </lineage>
</organism>
<proteinExistence type="inferred from homology"/>
<protein>
    <recommendedName>
        <fullName evidence="1">UPF0276 protein PA4106</fullName>
    </recommendedName>
</protein>
<reference key="1">
    <citation type="journal article" date="2000" name="Nature">
        <title>Complete genome sequence of Pseudomonas aeruginosa PAO1, an opportunistic pathogen.</title>
        <authorList>
            <person name="Stover C.K."/>
            <person name="Pham X.-Q.T."/>
            <person name="Erwin A.L."/>
            <person name="Mizoguchi S.D."/>
            <person name="Warrener P."/>
            <person name="Hickey M.J."/>
            <person name="Brinkman F.S.L."/>
            <person name="Hufnagle W.O."/>
            <person name="Kowalik D.J."/>
            <person name="Lagrou M."/>
            <person name="Garber R.L."/>
            <person name="Goltry L."/>
            <person name="Tolentino E."/>
            <person name="Westbrock-Wadman S."/>
            <person name="Yuan Y."/>
            <person name="Brody L.L."/>
            <person name="Coulter S.N."/>
            <person name="Folger K.R."/>
            <person name="Kas A."/>
            <person name="Larbig K."/>
            <person name="Lim R.M."/>
            <person name="Smith K.A."/>
            <person name="Spencer D.H."/>
            <person name="Wong G.K.-S."/>
            <person name="Wu Z."/>
            <person name="Paulsen I.T."/>
            <person name="Reizer J."/>
            <person name="Saier M.H. Jr."/>
            <person name="Hancock R.E.W."/>
            <person name="Lory S."/>
            <person name="Olson M.V."/>
        </authorList>
    </citation>
    <scope>NUCLEOTIDE SEQUENCE [LARGE SCALE GENOMIC DNA]</scope>
    <source>
        <strain>ATCC 15692 / DSM 22644 / CIP 104116 / JCM 14847 / LMG 12228 / 1C / PRS 101 / PAO1</strain>
    </source>
</reference>
<sequence>MTLIDNAAGLGLRRGLLPQLLAMAPGAVDFLECAPDNWIGVGGAFGADLERLVERIPLTCHGLSLSLGGSTPLDAAFIEQTRRFLVRHRVALYSEHLSYCSDDGHLYDLLPLPFTEAAVRHVAARIREAQERLERRIAVENISYYAAPYREMSEIEFVNAVLDEADCDLLLDVNNLFVNACNHGYDALDFLVRLPPGRVAAYHVAGHYDEAPDLKIDTHGAAVKPGVWALLGAAYRRFGVRPTLLERDFNYPPLGELLLEVEQIRQWQRDEGRRHG</sequence>
<gene>
    <name type="ordered locus">PA4106</name>
</gene>
<name>Y4106_PSEAE</name>
<feature type="chain" id="PRO_0000192701" description="UPF0276 protein PA4106">
    <location>
        <begin position="1"/>
        <end position="276"/>
    </location>
</feature>